<accession>A1JRM2</accession>
<name>CMOA_YERE8</name>
<keyword id="KW-0949">S-adenosyl-L-methionine</keyword>
<keyword id="KW-0808">Transferase</keyword>
<dbReference type="EC" id="2.1.3.-" evidence="1"/>
<dbReference type="EMBL" id="AM286415">
    <property type="protein sequence ID" value="CAL12453.1"/>
    <property type="status" value="ALT_INIT"/>
    <property type="molecule type" value="Genomic_DNA"/>
</dbReference>
<dbReference type="RefSeq" id="WP_042661448.1">
    <property type="nucleotide sequence ID" value="NC_008800.1"/>
</dbReference>
<dbReference type="RefSeq" id="YP_001006620.1">
    <property type="nucleotide sequence ID" value="NC_008800.1"/>
</dbReference>
<dbReference type="SMR" id="A1JRM2"/>
<dbReference type="KEGG" id="yen:YE2401"/>
<dbReference type="PATRIC" id="fig|393305.7.peg.2556"/>
<dbReference type="eggNOG" id="COG2226">
    <property type="taxonomic scope" value="Bacteria"/>
</dbReference>
<dbReference type="HOGENOM" id="CLU_078475_0_0_6"/>
<dbReference type="OrthoDB" id="9779941at2"/>
<dbReference type="Proteomes" id="UP000000642">
    <property type="component" value="Chromosome"/>
</dbReference>
<dbReference type="GO" id="GO:0016743">
    <property type="term" value="F:carboxyl- or carbamoyltransferase activity"/>
    <property type="evidence" value="ECO:0007669"/>
    <property type="project" value="UniProtKB-UniRule"/>
</dbReference>
<dbReference type="GO" id="GO:1904047">
    <property type="term" value="F:S-adenosyl-L-methionine binding"/>
    <property type="evidence" value="ECO:0007669"/>
    <property type="project" value="UniProtKB-UniRule"/>
</dbReference>
<dbReference type="GO" id="GO:0002098">
    <property type="term" value="P:tRNA wobble uridine modification"/>
    <property type="evidence" value="ECO:0007669"/>
    <property type="project" value="InterPro"/>
</dbReference>
<dbReference type="CDD" id="cd02440">
    <property type="entry name" value="AdoMet_MTases"/>
    <property type="match status" value="1"/>
</dbReference>
<dbReference type="Gene3D" id="3.40.50.150">
    <property type="entry name" value="Vaccinia Virus protein VP39"/>
    <property type="match status" value="1"/>
</dbReference>
<dbReference type="HAMAP" id="MF_01589">
    <property type="entry name" value="Cx_SAM_synthase"/>
    <property type="match status" value="1"/>
</dbReference>
<dbReference type="InterPro" id="IPR005271">
    <property type="entry name" value="CmoA"/>
</dbReference>
<dbReference type="InterPro" id="IPR041698">
    <property type="entry name" value="Methyltransf_25"/>
</dbReference>
<dbReference type="InterPro" id="IPR029063">
    <property type="entry name" value="SAM-dependent_MTases_sf"/>
</dbReference>
<dbReference type="NCBIfam" id="TIGR00740">
    <property type="entry name" value="carboxy-S-adenosyl-L-methionine synthase CmoA"/>
    <property type="match status" value="1"/>
</dbReference>
<dbReference type="NCBIfam" id="NF011995">
    <property type="entry name" value="PRK15451.1"/>
    <property type="match status" value="1"/>
</dbReference>
<dbReference type="PANTHER" id="PTHR43861:SF2">
    <property type="entry name" value="CARBOXY-S-ADENOSYL-L-METHIONINE SYNTHASE"/>
    <property type="match status" value="1"/>
</dbReference>
<dbReference type="PANTHER" id="PTHR43861">
    <property type="entry name" value="TRANS-ACONITATE 2-METHYLTRANSFERASE-RELATED"/>
    <property type="match status" value="1"/>
</dbReference>
<dbReference type="Pfam" id="PF13649">
    <property type="entry name" value="Methyltransf_25"/>
    <property type="match status" value="1"/>
</dbReference>
<dbReference type="PIRSF" id="PIRSF006325">
    <property type="entry name" value="MeTrfase_bac"/>
    <property type="match status" value="1"/>
</dbReference>
<dbReference type="SUPFAM" id="SSF53335">
    <property type="entry name" value="S-adenosyl-L-methionine-dependent methyltransferases"/>
    <property type="match status" value="1"/>
</dbReference>
<gene>
    <name evidence="1" type="primary">cmoA</name>
    <name type="ordered locus">YE2401</name>
</gene>
<feature type="chain" id="PRO_0000314405" description="Carboxy-S-adenosyl-L-methionine synthase">
    <location>
        <begin position="1"/>
        <end position="266"/>
    </location>
</feature>
<feature type="region of interest" description="Disordered" evidence="2">
    <location>
        <begin position="1"/>
        <end position="24"/>
    </location>
</feature>
<feature type="binding site" evidence="1">
    <location>
        <position position="58"/>
    </location>
    <ligand>
        <name>S-adenosyl-L-methionine</name>
        <dbReference type="ChEBI" id="CHEBI:59789"/>
    </ligand>
</feature>
<feature type="binding site" evidence="1">
    <location>
        <begin position="83"/>
        <end position="85"/>
    </location>
    <ligand>
        <name>S-adenosyl-L-methionine</name>
        <dbReference type="ChEBI" id="CHEBI:59789"/>
    </ligand>
</feature>
<feature type="binding site" evidence="1">
    <location>
        <begin position="108"/>
        <end position="109"/>
    </location>
    <ligand>
        <name>S-adenosyl-L-methionine</name>
        <dbReference type="ChEBI" id="CHEBI:59789"/>
    </ligand>
</feature>
<feature type="binding site" evidence="1">
    <location>
        <begin position="136"/>
        <end position="137"/>
    </location>
    <ligand>
        <name>S-adenosyl-L-methionine</name>
        <dbReference type="ChEBI" id="CHEBI:59789"/>
    </ligand>
</feature>
<feature type="binding site" evidence="1">
    <location>
        <position position="151"/>
    </location>
    <ligand>
        <name>S-adenosyl-L-methionine</name>
        <dbReference type="ChEBI" id="CHEBI:59789"/>
    </ligand>
</feature>
<feature type="binding site" evidence="1">
    <location>
        <position position="218"/>
    </location>
    <ligand>
        <name>S-adenosyl-L-methionine</name>
        <dbReference type="ChEBI" id="CHEBI:59789"/>
    </ligand>
</feature>
<reference key="1">
    <citation type="journal article" date="2006" name="PLoS Genet.">
        <title>The complete genome sequence and comparative genome analysis of the high pathogenicity Yersinia enterocolitica strain 8081.</title>
        <authorList>
            <person name="Thomson N.R."/>
            <person name="Howard S."/>
            <person name="Wren B.W."/>
            <person name="Holden M.T.G."/>
            <person name="Crossman L."/>
            <person name="Challis G.L."/>
            <person name="Churcher C."/>
            <person name="Mungall K."/>
            <person name="Brooks K."/>
            <person name="Chillingworth T."/>
            <person name="Feltwell T."/>
            <person name="Abdellah Z."/>
            <person name="Hauser H."/>
            <person name="Jagels K."/>
            <person name="Maddison M."/>
            <person name="Moule S."/>
            <person name="Sanders M."/>
            <person name="Whitehead S."/>
            <person name="Quail M.A."/>
            <person name="Dougan G."/>
            <person name="Parkhill J."/>
            <person name="Prentice M.B."/>
        </authorList>
    </citation>
    <scope>NUCLEOTIDE SEQUENCE [LARGE SCALE GENOMIC DNA]</scope>
    <source>
        <strain>NCTC 13174 / 8081</strain>
    </source>
</reference>
<protein>
    <recommendedName>
        <fullName evidence="1">Carboxy-S-adenosyl-L-methionine synthase</fullName>
        <shortName evidence="1">Cx-SAM synthase</shortName>
        <ecNumber evidence="1">2.1.3.-</ecNumber>
    </recommendedName>
</protein>
<organism>
    <name type="scientific">Yersinia enterocolitica serotype O:8 / biotype 1B (strain NCTC 13174 / 8081)</name>
    <dbReference type="NCBI Taxonomy" id="393305"/>
    <lineage>
        <taxon>Bacteria</taxon>
        <taxon>Pseudomonadati</taxon>
        <taxon>Pseudomonadota</taxon>
        <taxon>Gammaproteobacteria</taxon>
        <taxon>Enterobacterales</taxon>
        <taxon>Yersiniaceae</taxon>
        <taxon>Yersinia</taxon>
    </lineage>
</organism>
<comment type="function">
    <text evidence="1">Catalyzes the conversion of S-adenosyl-L-methionine (SAM) to carboxy-S-adenosyl-L-methionine (Cx-SAM).</text>
</comment>
<comment type="catalytic activity">
    <reaction evidence="1">
        <text>prephenate + S-adenosyl-L-methionine = carboxy-S-adenosyl-L-methionine + 3-phenylpyruvate + H2O</text>
        <dbReference type="Rhea" id="RHEA:51692"/>
        <dbReference type="ChEBI" id="CHEBI:15377"/>
        <dbReference type="ChEBI" id="CHEBI:18005"/>
        <dbReference type="ChEBI" id="CHEBI:29934"/>
        <dbReference type="ChEBI" id="CHEBI:59789"/>
        <dbReference type="ChEBI" id="CHEBI:134278"/>
    </reaction>
</comment>
<comment type="subunit">
    <text evidence="1">Homodimer.</text>
</comment>
<comment type="similarity">
    <text evidence="1">Belongs to the class I-like SAM-binding methyltransferase superfamily. Cx-SAM synthase family.</text>
</comment>
<comment type="sequence caution" evidence="3">
    <conflict type="erroneous initiation">
        <sequence resource="EMBL-CDS" id="CAL12453"/>
    </conflict>
</comment>
<sequence>MPKRETQSLHDTQQQPGPTAPQRDSLFAAPIAKLGDWTFDEKVAEVFPDMISRSVPGYSNIISMIGMLAERFVQPNSQIYDLGCSLGAATLSMRRNIKVEGCKIIAVDNSPAMIERCRRHIDAFRAETPVDVVESDILDIQLENASMVVLNFTLQFLEPADRQRLLNQVYQGLRPGGALVLSEKFNFEDNDVGELLFNMHHDFKRANGYSELEISQKRSMLENVMLTDSVETHKKRLHQAGFEHAEVWFQCFNFGSLIALKAGEAQ</sequence>
<proteinExistence type="inferred from homology"/>
<evidence type="ECO:0000255" key="1">
    <source>
        <dbReference type="HAMAP-Rule" id="MF_01589"/>
    </source>
</evidence>
<evidence type="ECO:0000256" key="2">
    <source>
        <dbReference type="SAM" id="MobiDB-lite"/>
    </source>
</evidence>
<evidence type="ECO:0000305" key="3"/>